<comment type="catalytic activity">
    <reaction evidence="1">
        <text>(S)-4-amino-5-oxopentanoate = 5-aminolevulinate</text>
        <dbReference type="Rhea" id="RHEA:14265"/>
        <dbReference type="ChEBI" id="CHEBI:57501"/>
        <dbReference type="ChEBI" id="CHEBI:356416"/>
        <dbReference type="EC" id="5.4.3.8"/>
    </reaction>
</comment>
<comment type="cofactor">
    <cofactor evidence="1">
        <name>pyridoxal 5'-phosphate</name>
        <dbReference type="ChEBI" id="CHEBI:597326"/>
    </cofactor>
</comment>
<comment type="pathway">
    <text evidence="1">Porphyrin-containing compound metabolism; protoporphyrin-IX biosynthesis; 5-aminolevulinate from L-glutamyl-tRNA(Glu): step 2/2.</text>
</comment>
<comment type="subunit">
    <text evidence="1">Homodimer.</text>
</comment>
<comment type="subcellular location">
    <subcellularLocation>
        <location evidence="1">Cytoplasm</location>
    </subcellularLocation>
</comment>
<comment type="similarity">
    <text evidence="1">Belongs to the class-III pyridoxal-phosphate-dependent aminotransferase family. HemL subfamily.</text>
</comment>
<reference key="1">
    <citation type="journal article" date="2006" name="J. Bacteriol.">
        <title>Whole-genome sequence of Listeria welshimeri reveals common steps in genome reduction with Listeria innocua as compared to Listeria monocytogenes.</title>
        <authorList>
            <person name="Hain T."/>
            <person name="Steinweg C."/>
            <person name="Kuenne C.T."/>
            <person name="Billion A."/>
            <person name="Ghai R."/>
            <person name="Chatterjee S.S."/>
            <person name="Domann E."/>
            <person name="Kaerst U."/>
            <person name="Goesmann A."/>
            <person name="Bekel T."/>
            <person name="Bartels D."/>
            <person name="Kaiser O."/>
            <person name="Meyer F."/>
            <person name="Puehler A."/>
            <person name="Weisshaar B."/>
            <person name="Wehland J."/>
            <person name="Liang C."/>
            <person name="Dandekar T."/>
            <person name="Lampidis R."/>
            <person name="Kreft J."/>
            <person name="Goebel W."/>
            <person name="Chakraborty T."/>
        </authorList>
    </citation>
    <scope>NUCLEOTIDE SEQUENCE [LARGE SCALE GENOMIC DNA]</scope>
    <source>
        <strain>ATCC 35897 / DSM 20650 / CCUG 15529 / CIP 8149 / NCTC 11857 / SLCC 5334 / V8</strain>
    </source>
</reference>
<proteinExistence type="inferred from homology"/>
<evidence type="ECO:0000255" key="1">
    <source>
        <dbReference type="HAMAP-Rule" id="MF_00375"/>
    </source>
</evidence>
<sequence>MLNYSKSEKAFKEAKKVLPGGVNSPVRAFNSVDATPVFMDHGKGAYITDIDGNEYIDYVLSWGPLILGHANPSVVDAITKAAMKGTSFGTPTEIETELAKLVIERVPSIEIVRMVSSGTEATMSAIRLARGYTKREKILKFEGSYHGHGDSLLIKAGSGVATLGLPDSPGVTKGLAADTITVPYNDVEGAKLAFEKYGEEIAAVIVEPVAGNMGVVPPIEGFLEGLRDLTTKYGALLIFDEVMTGFRVDYYSAQGYYVVTPDITCLGKVIGGGLPVGAYGGKKEIMEQIAPAGSIYQAGTLSGNPLAMNAGFETVRQLTPQHYDVFRSLIKRMEEGLTEISTRREVPISINKAGSMFGFFFTDQKVINFDTAKTSNLEFFRNYYREMLNQGIFLPPSQFEGVFISTMHTEKEIDKTLEAFDHTCKTLRG</sequence>
<gene>
    <name evidence="1" type="primary">hemL1</name>
    <name type="ordered locus">lwe1566</name>
</gene>
<accession>A0AJ02</accession>
<protein>
    <recommendedName>
        <fullName evidence="1">Glutamate-1-semialdehyde 2,1-aminomutase 1</fullName>
        <shortName evidence="1">GSA 1</shortName>
        <ecNumber evidence="1">5.4.3.8</ecNumber>
    </recommendedName>
    <alternativeName>
        <fullName evidence="1">Glutamate-1-semialdehyde aminotransferase 1</fullName>
        <shortName evidence="1">GSA-AT 1</shortName>
    </alternativeName>
</protein>
<feature type="chain" id="PRO_0000382336" description="Glutamate-1-semialdehyde 2,1-aminomutase 1">
    <location>
        <begin position="1"/>
        <end position="429"/>
    </location>
</feature>
<feature type="modified residue" description="N6-(pyridoxal phosphate)lysine" evidence="1">
    <location>
        <position position="268"/>
    </location>
</feature>
<dbReference type="EC" id="5.4.3.8" evidence="1"/>
<dbReference type="EMBL" id="AM263198">
    <property type="protein sequence ID" value="CAK20984.1"/>
    <property type="molecule type" value="Genomic_DNA"/>
</dbReference>
<dbReference type="RefSeq" id="WP_011702352.1">
    <property type="nucleotide sequence ID" value="NC_008555.1"/>
</dbReference>
<dbReference type="SMR" id="A0AJ02"/>
<dbReference type="STRING" id="386043.lwe1566"/>
<dbReference type="GeneID" id="61189443"/>
<dbReference type="KEGG" id="lwe:lwe1566"/>
<dbReference type="eggNOG" id="COG0001">
    <property type="taxonomic scope" value="Bacteria"/>
</dbReference>
<dbReference type="HOGENOM" id="CLU_016922_1_5_9"/>
<dbReference type="OrthoDB" id="9807885at2"/>
<dbReference type="UniPathway" id="UPA00251">
    <property type="reaction ID" value="UER00317"/>
</dbReference>
<dbReference type="Proteomes" id="UP000000779">
    <property type="component" value="Chromosome"/>
</dbReference>
<dbReference type="GO" id="GO:0005737">
    <property type="term" value="C:cytoplasm"/>
    <property type="evidence" value="ECO:0007669"/>
    <property type="project" value="UniProtKB-SubCell"/>
</dbReference>
<dbReference type="GO" id="GO:0042286">
    <property type="term" value="F:glutamate-1-semialdehyde 2,1-aminomutase activity"/>
    <property type="evidence" value="ECO:0007669"/>
    <property type="project" value="UniProtKB-UniRule"/>
</dbReference>
<dbReference type="GO" id="GO:0030170">
    <property type="term" value="F:pyridoxal phosphate binding"/>
    <property type="evidence" value="ECO:0007669"/>
    <property type="project" value="InterPro"/>
</dbReference>
<dbReference type="GO" id="GO:0008483">
    <property type="term" value="F:transaminase activity"/>
    <property type="evidence" value="ECO:0007669"/>
    <property type="project" value="InterPro"/>
</dbReference>
<dbReference type="GO" id="GO:0006782">
    <property type="term" value="P:protoporphyrinogen IX biosynthetic process"/>
    <property type="evidence" value="ECO:0007669"/>
    <property type="project" value="UniProtKB-UniRule"/>
</dbReference>
<dbReference type="CDD" id="cd00610">
    <property type="entry name" value="OAT_like"/>
    <property type="match status" value="1"/>
</dbReference>
<dbReference type="FunFam" id="3.40.640.10:FF:000021">
    <property type="entry name" value="Glutamate-1-semialdehyde 2,1-aminomutase"/>
    <property type="match status" value="1"/>
</dbReference>
<dbReference type="Gene3D" id="3.90.1150.10">
    <property type="entry name" value="Aspartate Aminotransferase, domain 1"/>
    <property type="match status" value="1"/>
</dbReference>
<dbReference type="Gene3D" id="3.40.640.10">
    <property type="entry name" value="Type I PLP-dependent aspartate aminotransferase-like (Major domain)"/>
    <property type="match status" value="1"/>
</dbReference>
<dbReference type="HAMAP" id="MF_00375">
    <property type="entry name" value="HemL_aminotrans_3"/>
    <property type="match status" value="1"/>
</dbReference>
<dbReference type="InterPro" id="IPR004639">
    <property type="entry name" value="4pyrrol_synth_GluAld_NH2Trfase"/>
</dbReference>
<dbReference type="InterPro" id="IPR005814">
    <property type="entry name" value="Aminotrans_3"/>
</dbReference>
<dbReference type="InterPro" id="IPR049704">
    <property type="entry name" value="Aminotrans_3_PPA_site"/>
</dbReference>
<dbReference type="InterPro" id="IPR015424">
    <property type="entry name" value="PyrdxlP-dep_Trfase"/>
</dbReference>
<dbReference type="InterPro" id="IPR015421">
    <property type="entry name" value="PyrdxlP-dep_Trfase_major"/>
</dbReference>
<dbReference type="InterPro" id="IPR015422">
    <property type="entry name" value="PyrdxlP-dep_Trfase_small"/>
</dbReference>
<dbReference type="NCBIfam" id="TIGR00713">
    <property type="entry name" value="hemL"/>
    <property type="match status" value="1"/>
</dbReference>
<dbReference type="NCBIfam" id="NF000818">
    <property type="entry name" value="PRK00062.1"/>
    <property type="match status" value="1"/>
</dbReference>
<dbReference type="PANTHER" id="PTHR43713">
    <property type="entry name" value="GLUTAMATE-1-SEMIALDEHYDE 2,1-AMINOMUTASE"/>
    <property type="match status" value="1"/>
</dbReference>
<dbReference type="PANTHER" id="PTHR43713:SF3">
    <property type="entry name" value="GLUTAMATE-1-SEMIALDEHYDE 2,1-AMINOMUTASE 1, CHLOROPLASTIC-RELATED"/>
    <property type="match status" value="1"/>
</dbReference>
<dbReference type="Pfam" id="PF00202">
    <property type="entry name" value="Aminotran_3"/>
    <property type="match status" value="1"/>
</dbReference>
<dbReference type="SUPFAM" id="SSF53383">
    <property type="entry name" value="PLP-dependent transferases"/>
    <property type="match status" value="1"/>
</dbReference>
<dbReference type="PROSITE" id="PS00600">
    <property type="entry name" value="AA_TRANSFER_CLASS_3"/>
    <property type="match status" value="1"/>
</dbReference>
<organism>
    <name type="scientific">Listeria welshimeri serovar 6b (strain ATCC 35897 / DSM 20650 / CCUG 15529 / CIP 8149 / NCTC 11857 / SLCC 5334 / V8)</name>
    <dbReference type="NCBI Taxonomy" id="386043"/>
    <lineage>
        <taxon>Bacteria</taxon>
        <taxon>Bacillati</taxon>
        <taxon>Bacillota</taxon>
        <taxon>Bacilli</taxon>
        <taxon>Bacillales</taxon>
        <taxon>Listeriaceae</taxon>
        <taxon>Listeria</taxon>
    </lineage>
</organism>
<keyword id="KW-0963">Cytoplasm</keyword>
<keyword id="KW-0413">Isomerase</keyword>
<keyword id="KW-0627">Porphyrin biosynthesis</keyword>
<keyword id="KW-0663">Pyridoxal phosphate</keyword>
<name>GSA1_LISW6</name>